<keyword id="KW-0648">Protein biosynthesis</keyword>
<keyword id="KW-1185">Reference proteome</keyword>
<keyword id="KW-0808">Transferase</keyword>
<evidence type="ECO:0000255" key="1">
    <source>
        <dbReference type="HAMAP-Rule" id="MF_00182"/>
    </source>
</evidence>
<organism>
    <name type="scientific">Bifidobacterium longum (strain NCC 2705)</name>
    <dbReference type="NCBI Taxonomy" id="206672"/>
    <lineage>
        <taxon>Bacteria</taxon>
        <taxon>Bacillati</taxon>
        <taxon>Actinomycetota</taxon>
        <taxon>Actinomycetes</taxon>
        <taxon>Bifidobacteriales</taxon>
        <taxon>Bifidobacteriaceae</taxon>
        <taxon>Bifidobacterium</taxon>
    </lineage>
</organism>
<comment type="function">
    <text evidence="1">Attaches a formyl group to the free amino group of methionyl-tRNA(fMet). The formyl group appears to play a dual role in the initiator identity of N-formylmethionyl-tRNA by promoting its recognition by IF2 and preventing the misappropriation of this tRNA by the elongation apparatus.</text>
</comment>
<comment type="catalytic activity">
    <reaction evidence="1">
        <text>L-methionyl-tRNA(fMet) + (6R)-10-formyltetrahydrofolate = N-formyl-L-methionyl-tRNA(fMet) + (6S)-5,6,7,8-tetrahydrofolate + H(+)</text>
        <dbReference type="Rhea" id="RHEA:24380"/>
        <dbReference type="Rhea" id="RHEA-COMP:9952"/>
        <dbReference type="Rhea" id="RHEA-COMP:9953"/>
        <dbReference type="ChEBI" id="CHEBI:15378"/>
        <dbReference type="ChEBI" id="CHEBI:57453"/>
        <dbReference type="ChEBI" id="CHEBI:78530"/>
        <dbReference type="ChEBI" id="CHEBI:78844"/>
        <dbReference type="ChEBI" id="CHEBI:195366"/>
        <dbReference type="EC" id="2.1.2.9"/>
    </reaction>
</comment>
<comment type="similarity">
    <text evidence="1">Belongs to the Fmt family.</text>
</comment>
<dbReference type="EC" id="2.1.2.9" evidence="1"/>
<dbReference type="EMBL" id="AE014295">
    <property type="protein sequence ID" value="AAN25572.1"/>
    <property type="molecule type" value="Genomic_DNA"/>
</dbReference>
<dbReference type="RefSeq" id="NP_696936.1">
    <property type="nucleotide sequence ID" value="NC_004307.2"/>
</dbReference>
<dbReference type="RefSeq" id="WP_007053160.1">
    <property type="nucleotide sequence ID" value="NC_004307.2"/>
</dbReference>
<dbReference type="SMR" id="Q8G3H1"/>
<dbReference type="STRING" id="206672.BL1789"/>
<dbReference type="EnsemblBacteria" id="AAN25572">
    <property type="protein sequence ID" value="AAN25572"/>
    <property type="gene ID" value="BL1789"/>
</dbReference>
<dbReference type="KEGG" id="blo:BL1789"/>
<dbReference type="PATRIC" id="fig|206672.9.peg.1842"/>
<dbReference type="HOGENOM" id="CLU_033347_1_0_11"/>
<dbReference type="OrthoDB" id="9802815at2"/>
<dbReference type="PhylomeDB" id="Q8G3H1"/>
<dbReference type="Proteomes" id="UP000000439">
    <property type="component" value="Chromosome"/>
</dbReference>
<dbReference type="GO" id="GO:0005829">
    <property type="term" value="C:cytosol"/>
    <property type="evidence" value="ECO:0007669"/>
    <property type="project" value="TreeGrafter"/>
</dbReference>
<dbReference type="GO" id="GO:0004479">
    <property type="term" value="F:methionyl-tRNA formyltransferase activity"/>
    <property type="evidence" value="ECO:0007669"/>
    <property type="project" value="UniProtKB-UniRule"/>
</dbReference>
<dbReference type="CDD" id="cd08646">
    <property type="entry name" value="FMT_core_Met-tRNA-FMT_N"/>
    <property type="match status" value="1"/>
</dbReference>
<dbReference type="CDD" id="cd08704">
    <property type="entry name" value="Met_tRNA_FMT_C"/>
    <property type="match status" value="1"/>
</dbReference>
<dbReference type="Gene3D" id="3.10.25.10">
    <property type="entry name" value="Formyl transferase, C-terminal domain"/>
    <property type="match status" value="1"/>
</dbReference>
<dbReference type="Gene3D" id="3.40.50.170">
    <property type="entry name" value="Formyl transferase, N-terminal domain"/>
    <property type="match status" value="1"/>
</dbReference>
<dbReference type="HAMAP" id="MF_00182">
    <property type="entry name" value="Formyl_trans"/>
    <property type="match status" value="1"/>
</dbReference>
<dbReference type="InterPro" id="IPR005794">
    <property type="entry name" value="Fmt"/>
</dbReference>
<dbReference type="InterPro" id="IPR005793">
    <property type="entry name" value="Formyl_trans_C"/>
</dbReference>
<dbReference type="InterPro" id="IPR037022">
    <property type="entry name" value="Formyl_trans_C_sf"/>
</dbReference>
<dbReference type="InterPro" id="IPR002376">
    <property type="entry name" value="Formyl_transf_N"/>
</dbReference>
<dbReference type="InterPro" id="IPR036477">
    <property type="entry name" value="Formyl_transf_N_sf"/>
</dbReference>
<dbReference type="InterPro" id="IPR011034">
    <property type="entry name" value="Formyl_transferase-like_C_sf"/>
</dbReference>
<dbReference type="InterPro" id="IPR044135">
    <property type="entry name" value="Met-tRNA-FMT_C"/>
</dbReference>
<dbReference type="InterPro" id="IPR041711">
    <property type="entry name" value="Met-tRNA-FMT_N"/>
</dbReference>
<dbReference type="NCBIfam" id="TIGR00460">
    <property type="entry name" value="fmt"/>
    <property type="match status" value="1"/>
</dbReference>
<dbReference type="PANTHER" id="PTHR11138">
    <property type="entry name" value="METHIONYL-TRNA FORMYLTRANSFERASE"/>
    <property type="match status" value="1"/>
</dbReference>
<dbReference type="PANTHER" id="PTHR11138:SF5">
    <property type="entry name" value="METHIONYL-TRNA FORMYLTRANSFERASE, MITOCHONDRIAL"/>
    <property type="match status" value="1"/>
</dbReference>
<dbReference type="Pfam" id="PF02911">
    <property type="entry name" value="Formyl_trans_C"/>
    <property type="match status" value="1"/>
</dbReference>
<dbReference type="Pfam" id="PF00551">
    <property type="entry name" value="Formyl_trans_N"/>
    <property type="match status" value="1"/>
</dbReference>
<dbReference type="SUPFAM" id="SSF50486">
    <property type="entry name" value="FMT C-terminal domain-like"/>
    <property type="match status" value="1"/>
</dbReference>
<dbReference type="SUPFAM" id="SSF53328">
    <property type="entry name" value="Formyltransferase"/>
    <property type="match status" value="1"/>
</dbReference>
<protein>
    <recommendedName>
        <fullName evidence="1">Methionyl-tRNA formyltransferase</fullName>
        <ecNumber evidence="1">2.1.2.9</ecNumber>
    </recommendedName>
</protein>
<sequence>MLKLVFAGTPDVAVPSLKAFAADPRFDVVGVITRPDAPTGRGRKLTPSPVKATALELGLPVIDLKPRSPEFMEALNNLHADIAAVIAYGNILPKNVLDAVPMGWYNLHFSNLPKWRGAAPAQRAIWAGDPTTGADVFKVGEGLDDGPIVASLTIELTGRETSGELLDRLAEEGAPMYVDALAAVGEGTATFTAQPAEGLEYAHKITVEDARISWTDEAEAIDRQVRACTPHPGAWTELFAEGPIADNDEPAAKPLTLHILAAQPADQSNPNTPAELQPGELKVGKKNVWVGTGSTPLELTQVKAQGKKAMRAADWARGARLSPAACVR</sequence>
<reference key="1">
    <citation type="journal article" date="2002" name="Proc. Natl. Acad. Sci. U.S.A.">
        <title>The genome sequence of Bifidobacterium longum reflects its adaptation to the human gastrointestinal tract.</title>
        <authorList>
            <person name="Schell M.A."/>
            <person name="Karmirantzou M."/>
            <person name="Snel B."/>
            <person name="Vilanova D."/>
            <person name="Berger B."/>
            <person name="Pessi G."/>
            <person name="Zwahlen M.-C."/>
            <person name="Desiere F."/>
            <person name="Bork P."/>
            <person name="Delley M."/>
            <person name="Pridmore R.D."/>
            <person name="Arigoni F."/>
        </authorList>
    </citation>
    <scope>NUCLEOTIDE SEQUENCE [LARGE SCALE GENOMIC DNA]</scope>
    <source>
        <strain>NCC 2705</strain>
    </source>
</reference>
<accession>Q8G3H1</accession>
<gene>
    <name evidence="1" type="primary">fmt</name>
    <name type="ordered locus">BL1789</name>
</gene>
<feature type="chain" id="PRO_0000082923" description="Methionyl-tRNA formyltransferase">
    <location>
        <begin position="1"/>
        <end position="328"/>
    </location>
</feature>
<feature type="binding site" evidence="1">
    <location>
        <begin position="110"/>
        <end position="113"/>
    </location>
    <ligand>
        <name>(6S)-5,6,7,8-tetrahydrofolate</name>
        <dbReference type="ChEBI" id="CHEBI:57453"/>
    </ligand>
</feature>
<proteinExistence type="inferred from homology"/>
<name>FMT_BIFLO</name>